<organism>
    <name type="scientific">Escherichia coli</name>
    <dbReference type="NCBI Taxonomy" id="562"/>
    <lineage>
        <taxon>Bacteria</taxon>
        <taxon>Pseudomonadati</taxon>
        <taxon>Pseudomonadota</taxon>
        <taxon>Gammaproteobacteria</taxon>
        <taxon>Enterobacterales</taxon>
        <taxon>Enterobacteriaceae</taxon>
        <taxon>Escherichia</taxon>
    </lineage>
</organism>
<protein>
    <recommendedName>
        <fullName>Quaternary ammonium compound-resistance protein QacE</fullName>
    </recommendedName>
    <alternativeName>
        <fullName>Quaternary ammonium determinant E</fullName>
    </alternativeName>
</protein>
<proteinExistence type="inferred from homology"/>
<sequence length="110" mass="11472">MKGWLFLVIAIVGEVIATSALKSSEGFTKLAPSAVVIIGYGIAFYFLSLVLKSIPVGVAYAVWSGLGVVIITAIAWLLHGQKLDAWGFVGMGLIVSGVVVLNLLSKASAH</sequence>
<gene>
    <name type="primary">qacE</name>
</gene>
<geneLocation type="plasmid">
    <name>IncP-beta R751</name>
</geneLocation>
<name>QACE_ECOLX</name>
<dbReference type="RefSeq" id="WP_010890145.1">
    <property type="nucleotide sequence ID" value="NZ_JAKSGM010000086.1"/>
</dbReference>
<dbReference type="SMR" id="P0AGC9"/>
<dbReference type="GO" id="GO:0005886">
    <property type="term" value="C:plasma membrane"/>
    <property type="evidence" value="ECO:0007669"/>
    <property type="project" value="UniProtKB-SubCell"/>
</dbReference>
<dbReference type="GO" id="GO:0022857">
    <property type="term" value="F:transmembrane transporter activity"/>
    <property type="evidence" value="ECO:0007669"/>
    <property type="project" value="InterPro"/>
</dbReference>
<dbReference type="FunFam" id="1.10.3730.20:FF:000001">
    <property type="entry name" value="Quaternary ammonium compound resistance transporter SugE"/>
    <property type="match status" value="1"/>
</dbReference>
<dbReference type="Gene3D" id="1.10.3730.20">
    <property type="match status" value="1"/>
</dbReference>
<dbReference type="InterPro" id="IPR000390">
    <property type="entry name" value="Small_drug/metabolite_transptr"/>
</dbReference>
<dbReference type="InterPro" id="IPR045324">
    <property type="entry name" value="Small_multidrug_res"/>
</dbReference>
<dbReference type="NCBIfam" id="NF000276">
    <property type="entry name" value="SMR_qac_E"/>
    <property type="match status" value="1"/>
</dbReference>
<dbReference type="NCBIfam" id="NF033137">
    <property type="entry name" value="SMR_qac_int"/>
    <property type="match status" value="1"/>
</dbReference>
<dbReference type="PANTHER" id="PTHR30561:SF1">
    <property type="entry name" value="MULTIDRUG TRANSPORTER EMRE"/>
    <property type="match status" value="1"/>
</dbReference>
<dbReference type="PANTHER" id="PTHR30561">
    <property type="entry name" value="SMR FAMILY PROTON-DEPENDENT DRUG EFFLUX TRANSPORTER SUGE"/>
    <property type="match status" value="1"/>
</dbReference>
<dbReference type="Pfam" id="PF00893">
    <property type="entry name" value="Multi_Drug_Res"/>
    <property type="match status" value="1"/>
</dbReference>
<dbReference type="SUPFAM" id="SSF103481">
    <property type="entry name" value="Multidrug resistance efflux transporter EmrE"/>
    <property type="match status" value="1"/>
</dbReference>
<comment type="function">
    <text>Multidrug exporter. Is implicated for the resistance to bacteriocidal quaternary ammonium compounds.</text>
</comment>
<comment type="subcellular location">
    <subcellularLocation>
        <location evidence="2">Cell membrane</location>
        <topology evidence="2">Multi-pass membrane protein</topology>
    </subcellularLocation>
</comment>
<comment type="similarity">
    <text evidence="2">Belongs to the drug/metabolite transporter (DMT) superfamily. Small multidrug resistance (SMR) (TC 2.A.7.1) family.</text>
</comment>
<keyword id="KW-1003">Cell membrane</keyword>
<keyword id="KW-0472">Membrane</keyword>
<keyword id="KW-0614">Plasmid</keyword>
<keyword id="KW-0812">Transmembrane</keyword>
<keyword id="KW-1133">Transmembrane helix</keyword>
<keyword id="KW-0813">Transport</keyword>
<feature type="chain" id="PRO_0000108085" description="Quaternary ammonium compound-resistance protein QacE">
    <location>
        <begin position="1"/>
        <end position="110"/>
    </location>
</feature>
<feature type="transmembrane region" description="Helical" evidence="1">
    <location>
        <begin position="1"/>
        <end position="21"/>
    </location>
</feature>
<feature type="transmembrane region" description="Helical" evidence="1">
    <location>
        <begin position="30"/>
        <end position="50"/>
    </location>
</feature>
<feature type="transmembrane region" description="Helical" evidence="1">
    <location>
        <begin position="58"/>
        <end position="78"/>
    </location>
</feature>
<feature type="transmembrane region" description="Helical" evidence="1">
    <location>
        <begin position="85"/>
        <end position="105"/>
    </location>
</feature>
<accession>P0AGC9</accession>
<accession>Q57225</accession>
<evidence type="ECO:0000255" key="1"/>
<evidence type="ECO:0000305" key="2"/>
<reference key="1">
    <citation type="journal article" date="1993" name="Antimicrob. Agents Chemother.">
        <title>The 3' conserved segment of integrons contains a gene associated with multidrug resistance to antiseptics and disinfectants.</title>
        <authorList>
            <person name="Paulsen I.T."/>
            <person name="Littlejohn T.G."/>
            <person name="Radstroem P."/>
            <person name="Sundstroem L."/>
            <person name="Skoeld O."/>
            <person name="Swedberg G."/>
            <person name="Skurray R.A."/>
        </authorList>
    </citation>
    <scope>NUCLEOTIDE SEQUENCE [GENOMIC DNA]</scope>
</reference>